<reference key="1">
    <citation type="journal article" date="2001" name="Proc. Natl. Acad. Sci. U.S.A.">
        <title>Complete genome sequence of an M1 strain of Streptococcus pyogenes.</title>
        <authorList>
            <person name="Ferretti J.J."/>
            <person name="McShan W.M."/>
            <person name="Ajdic D.J."/>
            <person name="Savic D.J."/>
            <person name="Savic G."/>
            <person name="Lyon K."/>
            <person name="Primeaux C."/>
            <person name="Sezate S."/>
            <person name="Suvorov A.N."/>
            <person name="Kenton S."/>
            <person name="Lai H.S."/>
            <person name="Lin S.P."/>
            <person name="Qian Y."/>
            <person name="Jia H.G."/>
            <person name="Najar F.Z."/>
            <person name="Ren Q."/>
            <person name="Zhu H."/>
            <person name="Song L."/>
            <person name="White J."/>
            <person name="Yuan X."/>
            <person name="Clifton S.W."/>
            <person name="Roe B.A."/>
            <person name="McLaughlin R.E."/>
        </authorList>
    </citation>
    <scope>NUCLEOTIDE SEQUENCE [LARGE SCALE GENOMIC DNA]</scope>
    <source>
        <strain>ATCC 700294 / SF370 / Serotype M1</strain>
    </source>
</reference>
<reference key="2">
    <citation type="journal article" date="2005" name="J. Infect. Dis.">
        <title>Evolutionary origin and emergence of a highly successful clone of serotype M1 group A Streptococcus involved multiple horizontal gene transfer events.</title>
        <authorList>
            <person name="Sumby P."/>
            <person name="Porcella S.F."/>
            <person name="Madrigal A.G."/>
            <person name="Barbian K.D."/>
            <person name="Virtaneva K."/>
            <person name="Ricklefs S.M."/>
            <person name="Sturdevant D.E."/>
            <person name="Graham M.R."/>
            <person name="Vuopio-Varkila J."/>
            <person name="Hoe N.P."/>
            <person name="Musser J.M."/>
        </authorList>
    </citation>
    <scope>NUCLEOTIDE SEQUENCE [LARGE SCALE GENOMIC DNA]</scope>
    <source>
        <strain>ATCC BAA-947 / MGAS5005 / Serotype M1</strain>
    </source>
</reference>
<keyword id="KW-0227">DNA damage</keyword>
<keyword id="KW-0233">DNA recombination</keyword>
<keyword id="KW-0234">DNA repair</keyword>
<keyword id="KW-0235">DNA replication</keyword>
<keyword id="KW-0238">DNA-binding</keyword>
<keyword id="KW-1185">Reference proteome</keyword>
<organism>
    <name type="scientific">Streptococcus pyogenes serotype M1</name>
    <dbReference type="NCBI Taxonomy" id="301447"/>
    <lineage>
        <taxon>Bacteria</taxon>
        <taxon>Bacillati</taxon>
        <taxon>Bacillota</taxon>
        <taxon>Bacilli</taxon>
        <taxon>Lactobacillales</taxon>
        <taxon>Streptococcaceae</taxon>
        <taxon>Streptococcus</taxon>
    </lineage>
</organism>
<feature type="chain" id="PRO_0000096118" description="Single-stranded DNA-binding protein">
    <location>
        <begin position="1"/>
        <end position="163"/>
    </location>
</feature>
<feature type="domain" description="SSB" evidence="1">
    <location>
        <begin position="1"/>
        <end position="104"/>
    </location>
</feature>
<feature type="region of interest" description="Disordered" evidence="2">
    <location>
        <begin position="109"/>
        <end position="163"/>
    </location>
</feature>
<feature type="short sequence motif" description="Important for interaction with partner proteins" evidence="1">
    <location>
        <begin position="158"/>
        <end position="163"/>
    </location>
</feature>
<feature type="compositionally biased region" description="Low complexity" evidence="2">
    <location>
        <begin position="119"/>
        <end position="130"/>
    </location>
</feature>
<feature type="compositionally biased region" description="Polar residues" evidence="2">
    <location>
        <begin position="131"/>
        <end position="140"/>
    </location>
</feature>
<protein>
    <recommendedName>
        <fullName evidence="1">Single-stranded DNA-binding protein</fullName>
        <shortName evidence="1">SSB</shortName>
    </recommendedName>
</protein>
<dbReference type="EMBL" id="AE004092">
    <property type="protein sequence ID" value="AAK34552.1"/>
    <property type="molecule type" value="Genomic_DNA"/>
</dbReference>
<dbReference type="EMBL" id="CP000017">
    <property type="protein sequence ID" value="AAZ52172.1"/>
    <property type="molecule type" value="Genomic_DNA"/>
</dbReference>
<dbReference type="RefSeq" id="NP_269831.1">
    <property type="nucleotide sequence ID" value="NC_002737.2"/>
</dbReference>
<dbReference type="SMR" id="P66852"/>
<dbReference type="PaxDb" id="1314-HKU360_01676"/>
<dbReference type="KEGG" id="spy:SPy_1830"/>
<dbReference type="KEGG" id="spz:M5005_Spy1554"/>
<dbReference type="PATRIC" id="fig|160490.10.peg.1589"/>
<dbReference type="HOGENOM" id="CLU_078758_6_2_9"/>
<dbReference type="OMA" id="CFIDARL"/>
<dbReference type="Proteomes" id="UP000000750">
    <property type="component" value="Chromosome"/>
</dbReference>
<dbReference type="GO" id="GO:0009295">
    <property type="term" value="C:nucleoid"/>
    <property type="evidence" value="ECO:0007669"/>
    <property type="project" value="TreeGrafter"/>
</dbReference>
<dbReference type="GO" id="GO:0003697">
    <property type="term" value="F:single-stranded DNA binding"/>
    <property type="evidence" value="ECO:0007669"/>
    <property type="project" value="UniProtKB-UniRule"/>
</dbReference>
<dbReference type="GO" id="GO:0006310">
    <property type="term" value="P:DNA recombination"/>
    <property type="evidence" value="ECO:0007669"/>
    <property type="project" value="UniProtKB-UniRule"/>
</dbReference>
<dbReference type="GO" id="GO:0006281">
    <property type="term" value="P:DNA repair"/>
    <property type="evidence" value="ECO:0007669"/>
    <property type="project" value="UniProtKB-UniRule"/>
</dbReference>
<dbReference type="GO" id="GO:0006260">
    <property type="term" value="P:DNA replication"/>
    <property type="evidence" value="ECO:0007669"/>
    <property type="project" value="UniProtKB-UniRule"/>
</dbReference>
<dbReference type="CDD" id="cd04496">
    <property type="entry name" value="SSB_OBF"/>
    <property type="match status" value="1"/>
</dbReference>
<dbReference type="FunFam" id="2.40.50.140:FF:000084">
    <property type="entry name" value="Single-stranded DNA-binding protein"/>
    <property type="match status" value="1"/>
</dbReference>
<dbReference type="Gene3D" id="2.40.50.140">
    <property type="entry name" value="Nucleic acid-binding proteins"/>
    <property type="match status" value="1"/>
</dbReference>
<dbReference type="HAMAP" id="MF_00984">
    <property type="entry name" value="SSB"/>
    <property type="match status" value="1"/>
</dbReference>
<dbReference type="InterPro" id="IPR012340">
    <property type="entry name" value="NA-bd_OB-fold"/>
</dbReference>
<dbReference type="InterPro" id="IPR000424">
    <property type="entry name" value="Primosome_PriB/ssb"/>
</dbReference>
<dbReference type="InterPro" id="IPR011344">
    <property type="entry name" value="ssDNA-bd"/>
</dbReference>
<dbReference type="NCBIfam" id="NF005580">
    <property type="entry name" value="PRK07275.1"/>
    <property type="match status" value="1"/>
</dbReference>
<dbReference type="NCBIfam" id="TIGR00621">
    <property type="entry name" value="ssb"/>
    <property type="match status" value="1"/>
</dbReference>
<dbReference type="PANTHER" id="PTHR10302">
    <property type="entry name" value="SINGLE-STRANDED DNA-BINDING PROTEIN"/>
    <property type="match status" value="1"/>
</dbReference>
<dbReference type="PANTHER" id="PTHR10302:SF27">
    <property type="entry name" value="SINGLE-STRANDED DNA-BINDING PROTEIN"/>
    <property type="match status" value="1"/>
</dbReference>
<dbReference type="Pfam" id="PF00436">
    <property type="entry name" value="SSB"/>
    <property type="match status" value="1"/>
</dbReference>
<dbReference type="PIRSF" id="PIRSF002070">
    <property type="entry name" value="SSB"/>
    <property type="match status" value="1"/>
</dbReference>
<dbReference type="SUPFAM" id="SSF50249">
    <property type="entry name" value="Nucleic acid-binding proteins"/>
    <property type="match status" value="1"/>
</dbReference>
<dbReference type="PROSITE" id="PS50935">
    <property type="entry name" value="SSB"/>
    <property type="match status" value="1"/>
</dbReference>
<proteinExistence type="inferred from homology"/>
<gene>
    <name type="primary">ssb3</name>
    <name type="synonym">ssb</name>
    <name type="ordered locus">SPy_1830</name>
    <name type="ordered locus">M5005_Spy1554</name>
</gene>
<comment type="function">
    <text evidence="1">Plays an important role in DNA replication, recombination and repair. Binds to ssDNA and to an array of partner proteins to recruit them to their sites of action during DNA metabolism.</text>
</comment>
<comment type="subunit">
    <text evidence="1">Homotetramer.</text>
</comment>
<name>SSB_STRP1</name>
<evidence type="ECO:0000255" key="1">
    <source>
        <dbReference type="HAMAP-Rule" id="MF_00984"/>
    </source>
</evidence>
<evidence type="ECO:0000256" key="2">
    <source>
        <dbReference type="SAM" id="MobiDB-lite"/>
    </source>
</evidence>
<accession>P66852</accession>
<accession>Q48WV3</accession>
<accession>Q99Y80</accession>
<sequence>MINNVVLVGRMTKDAELRYTPSQVAVATFTLAVNRTFKSQNGEREADFINCVIWRQPAENLANWAKKGALIGVTGRIQTRNYENQQGQRVYVTEVVADNFQMLESRATREGGSTGSFNGGFNNNTSSSNSYSAPAQQTPNFGRDDSPFGNSNPMDISDDDLPF</sequence>